<comment type="catalytic activity">
    <reaction evidence="1">
        <text>(2R)-3-phosphoglycerate + ATP = (2R)-3-phospho-glyceroyl phosphate + ADP</text>
        <dbReference type="Rhea" id="RHEA:14801"/>
        <dbReference type="ChEBI" id="CHEBI:30616"/>
        <dbReference type="ChEBI" id="CHEBI:57604"/>
        <dbReference type="ChEBI" id="CHEBI:58272"/>
        <dbReference type="ChEBI" id="CHEBI:456216"/>
        <dbReference type="EC" id="2.7.2.3"/>
    </reaction>
</comment>
<comment type="pathway">
    <text evidence="1">Carbohydrate degradation; glycolysis; pyruvate from D-glyceraldehyde 3-phosphate: step 2/5.</text>
</comment>
<comment type="subunit">
    <text evidence="1">Monomer.</text>
</comment>
<comment type="subcellular location">
    <subcellularLocation>
        <location evidence="1">Cytoplasm</location>
    </subcellularLocation>
</comment>
<comment type="similarity">
    <text evidence="1">Belongs to the phosphoglycerate kinase family.</text>
</comment>
<protein>
    <recommendedName>
        <fullName evidence="1">Phosphoglycerate kinase</fullName>
        <ecNumber evidence="1">2.7.2.3</ecNumber>
    </recommendedName>
</protein>
<dbReference type="EC" id="2.7.2.3" evidence="1"/>
<dbReference type="EMBL" id="CP000447">
    <property type="protein sequence ID" value="ABI70509.1"/>
    <property type="molecule type" value="Genomic_DNA"/>
</dbReference>
<dbReference type="RefSeq" id="WP_011636136.1">
    <property type="nucleotide sequence ID" value="NC_008345.1"/>
</dbReference>
<dbReference type="SMR" id="Q087Q6"/>
<dbReference type="STRING" id="318167.Sfri_0649"/>
<dbReference type="KEGG" id="sfr:Sfri_0649"/>
<dbReference type="eggNOG" id="COG0126">
    <property type="taxonomic scope" value="Bacteria"/>
</dbReference>
<dbReference type="HOGENOM" id="CLU_025427_0_2_6"/>
<dbReference type="OrthoDB" id="9808460at2"/>
<dbReference type="UniPathway" id="UPA00109">
    <property type="reaction ID" value="UER00185"/>
</dbReference>
<dbReference type="Proteomes" id="UP000000684">
    <property type="component" value="Chromosome"/>
</dbReference>
<dbReference type="GO" id="GO:0005829">
    <property type="term" value="C:cytosol"/>
    <property type="evidence" value="ECO:0007669"/>
    <property type="project" value="TreeGrafter"/>
</dbReference>
<dbReference type="GO" id="GO:0043531">
    <property type="term" value="F:ADP binding"/>
    <property type="evidence" value="ECO:0007669"/>
    <property type="project" value="TreeGrafter"/>
</dbReference>
<dbReference type="GO" id="GO:0005524">
    <property type="term" value="F:ATP binding"/>
    <property type="evidence" value="ECO:0007669"/>
    <property type="project" value="UniProtKB-KW"/>
</dbReference>
<dbReference type="GO" id="GO:0004618">
    <property type="term" value="F:phosphoglycerate kinase activity"/>
    <property type="evidence" value="ECO:0007669"/>
    <property type="project" value="UniProtKB-UniRule"/>
</dbReference>
<dbReference type="GO" id="GO:0006094">
    <property type="term" value="P:gluconeogenesis"/>
    <property type="evidence" value="ECO:0007669"/>
    <property type="project" value="TreeGrafter"/>
</dbReference>
<dbReference type="GO" id="GO:0006096">
    <property type="term" value="P:glycolytic process"/>
    <property type="evidence" value="ECO:0007669"/>
    <property type="project" value="UniProtKB-UniRule"/>
</dbReference>
<dbReference type="FunFam" id="3.40.50.1260:FF:000001">
    <property type="entry name" value="Phosphoglycerate kinase"/>
    <property type="match status" value="1"/>
</dbReference>
<dbReference type="FunFam" id="3.40.50.1260:FF:000002">
    <property type="entry name" value="Phosphoglycerate kinase"/>
    <property type="match status" value="1"/>
</dbReference>
<dbReference type="Gene3D" id="3.40.50.1260">
    <property type="entry name" value="Phosphoglycerate kinase, N-terminal domain"/>
    <property type="match status" value="2"/>
</dbReference>
<dbReference type="HAMAP" id="MF_00145">
    <property type="entry name" value="Phosphoglyc_kinase"/>
    <property type="match status" value="1"/>
</dbReference>
<dbReference type="InterPro" id="IPR001576">
    <property type="entry name" value="Phosphoglycerate_kinase"/>
</dbReference>
<dbReference type="InterPro" id="IPR015911">
    <property type="entry name" value="Phosphoglycerate_kinase_CS"/>
</dbReference>
<dbReference type="InterPro" id="IPR015824">
    <property type="entry name" value="Phosphoglycerate_kinase_N"/>
</dbReference>
<dbReference type="InterPro" id="IPR036043">
    <property type="entry name" value="Phosphoglycerate_kinase_sf"/>
</dbReference>
<dbReference type="PANTHER" id="PTHR11406">
    <property type="entry name" value="PHOSPHOGLYCERATE KINASE"/>
    <property type="match status" value="1"/>
</dbReference>
<dbReference type="PANTHER" id="PTHR11406:SF23">
    <property type="entry name" value="PHOSPHOGLYCERATE KINASE 1, CHLOROPLASTIC-RELATED"/>
    <property type="match status" value="1"/>
</dbReference>
<dbReference type="Pfam" id="PF00162">
    <property type="entry name" value="PGK"/>
    <property type="match status" value="1"/>
</dbReference>
<dbReference type="PIRSF" id="PIRSF000724">
    <property type="entry name" value="Pgk"/>
    <property type="match status" value="1"/>
</dbReference>
<dbReference type="PRINTS" id="PR00477">
    <property type="entry name" value="PHGLYCKINASE"/>
</dbReference>
<dbReference type="SUPFAM" id="SSF53748">
    <property type="entry name" value="Phosphoglycerate kinase"/>
    <property type="match status" value="1"/>
</dbReference>
<dbReference type="PROSITE" id="PS00111">
    <property type="entry name" value="PGLYCERATE_KINASE"/>
    <property type="match status" value="1"/>
</dbReference>
<reference key="1">
    <citation type="submission" date="2006-08" db="EMBL/GenBank/DDBJ databases">
        <title>Complete sequence of Shewanella frigidimarina NCIMB 400.</title>
        <authorList>
            <consortium name="US DOE Joint Genome Institute"/>
            <person name="Copeland A."/>
            <person name="Lucas S."/>
            <person name="Lapidus A."/>
            <person name="Barry K."/>
            <person name="Detter J.C."/>
            <person name="Glavina del Rio T."/>
            <person name="Hammon N."/>
            <person name="Israni S."/>
            <person name="Dalin E."/>
            <person name="Tice H."/>
            <person name="Pitluck S."/>
            <person name="Fredrickson J.K."/>
            <person name="Kolker E."/>
            <person name="McCuel L.A."/>
            <person name="DiChristina T."/>
            <person name="Nealson K.H."/>
            <person name="Newman D."/>
            <person name="Tiedje J.M."/>
            <person name="Zhou J."/>
            <person name="Romine M.F."/>
            <person name="Culley D.E."/>
            <person name="Serres M."/>
            <person name="Chertkov O."/>
            <person name="Brettin T."/>
            <person name="Bruce D."/>
            <person name="Han C."/>
            <person name="Tapia R."/>
            <person name="Gilna P."/>
            <person name="Schmutz J."/>
            <person name="Larimer F."/>
            <person name="Land M."/>
            <person name="Hauser L."/>
            <person name="Kyrpides N."/>
            <person name="Mikhailova N."/>
            <person name="Richardson P."/>
        </authorList>
    </citation>
    <scope>NUCLEOTIDE SEQUENCE [LARGE SCALE GENOMIC DNA]</scope>
    <source>
        <strain>NCIMB 400</strain>
    </source>
</reference>
<gene>
    <name evidence="1" type="primary">pgk</name>
    <name type="ordered locus">Sfri_0649</name>
</gene>
<name>PGK_SHEFN</name>
<sequence>MAIINMTDLDLQNKRVLIREDLNVPVSDGVVTSDARLRASLPTIQLALKKGAAVMVMSHLGRPTEGEFNAEYSMQPVVDYLAKALDCPVRLVSDYLDGVDVNVGEVVVFENVRFNVGEGKNDEALSKKMAALCDVYVMDAFGTAHRAQASTHGVGVYAPIACAGPLLSQELDALGKALDNPARPMVAIVGGSKVSTKLTVLESLSTKVDQLVVGGGIANTFIAAAGYKVGKSLYEADLVEEAKRLVANARSRGGDIPVPTDVVVASEFSPTAAATLKSVADVTDSDMIFDIGPDSAEALAKIIEQAGTIVWNGPVGVFEFDQFGEGTKRIAQAIANSKAFSIAGGGDTLAAVDKYNIADKVSYISTGGGAFLEFLEGKELPAVAMLEKRGA</sequence>
<keyword id="KW-0067">ATP-binding</keyword>
<keyword id="KW-0963">Cytoplasm</keyword>
<keyword id="KW-0324">Glycolysis</keyword>
<keyword id="KW-0418">Kinase</keyword>
<keyword id="KW-0547">Nucleotide-binding</keyword>
<keyword id="KW-1185">Reference proteome</keyword>
<keyword id="KW-0808">Transferase</keyword>
<accession>Q087Q6</accession>
<organism>
    <name type="scientific">Shewanella frigidimarina (strain NCIMB 400)</name>
    <dbReference type="NCBI Taxonomy" id="318167"/>
    <lineage>
        <taxon>Bacteria</taxon>
        <taxon>Pseudomonadati</taxon>
        <taxon>Pseudomonadota</taxon>
        <taxon>Gammaproteobacteria</taxon>
        <taxon>Alteromonadales</taxon>
        <taxon>Shewanellaceae</taxon>
        <taxon>Shewanella</taxon>
    </lineage>
</organism>
<proteinExistence type="inferred from homology"/>
<feature type="chain" id="PRO_1000058057" description="Phosphoglycerate kinase">
    <location>
        <begin position="1"/>
        <end position="391"/>
    </location>
</feature>
<feature type="binding site" evidence="1">
    <location>
        <begin position="21"/>
        <end position="23"/>
    </location>
    <ligand>
        <name>substrate</name>
    </ligand>
</feature>
<feature type="binding site" evidence="1">
    <location>
        <position position="36"/>
    </location>
    <ligand>
        <name>substrate</name>
    </ligand>
</feature>
<feature type="binding site" evidence="1">
    <location>
        <begin position="59"/>
        <end position="62"/>
    </location>
    <ligand>
        <name>substrate</name>
    </ligand>
</feature>
<feature type="binding site" evidence="1">
    <location>
        <position position="113"/>
    </location>
    <ligand>
        <name>substrate</name>
    </ligand>
</feature>
<feature type="binding site" evidence="1">
    <location>
        <position position="146"/>
    </location>
    <ligand>
        <name>substrate</name>
    </ligand>
</feature>
<feature type="binding site" evidence="1">
    <location>
        <position position="197"/>
    </location>
    <ligand>
        <name>ATP</name>
        <dbReference type="ChEBI" id="CHEBI:30616"/>
    </ligand>
</feature>
<feature type="binding site" evidence="1">
    <location>
        <position position="319"/>
    </location>
    <ligand>
        <name>ATP</name>
        <dbReference type="ChEBI" id="CHEBI:30616"/>
    </ligand>
</feature>
<feature type="binding site" evidence="1">
    <location>
        <begin position="345"/>
        <end position="348"/>
    </location>
    <ligand>
        <name>ATP</name>
        <dbReference type="ChEBI" id="CHEBI:30616"/>
    </ligand>
</feature>
<evidence type="ECO:0000255" key="1">
    <source>
        <dbReference type="HAMAP-Rule" id="MF_00145"/>
    </source>
</evidence>